<comment type="function">
    <text evidence="1">Carrier of the growing fatty acid chain in fatty acid biosynthesis.</text>
</comment>
<comment type="pathway">
    <text evidence="1">Lipid metabolism; fatty acid biosynthesis.</text>
</comment>
<comment type="subcellular location">
    <subcellularLocation>
        <location evidence="1">Cytoplasm</location>
    </subcellularLocation>
</comment>
<comment type="PTM">
    <text evidence="1">4'-phosphopantetheine is transferred from CoA to a specific serine of apo-ACP by AcpS. This modification is essential for activity because fatty acids are bound in thioester linkage to the sulfhydryl of the prosthetic group.</text>
</comment>
<comment type="similarity">
    <text evidence="1">Belongs to the acyl carrier protein (ACP) family.</text>
</comment>
<accession>B1J4Z1</accession>
<reference key="1">
    <citation type="submission" date="2008-02" db="EMBL/GenBank/DDBJ databases">
        <title>Complete sequence of Pseudomonas putida W619.</title>
        <authorList>
            <person name="Copeland A."/>
            <person name="Lucas S."/>
            <person name="Lapidus A."/>
            <person name="Barry K."/>
            <person name="Detter J.C."/>
            <person name="Glavina del Rio T."/>
            <person name="Dalin E."/>
            <person name="Tice H."/>
            <person name="Pitluck S."/>
            <person name="Chain P."/>
            <person name="Malfatti S."/>
            <person name="Shin M."/>
            <person name="Vergez L."/>
            <person name="Schmutz J."/>
            <person name="Larimer F."/>
            <person name="Land M."/>
            <person name="Hauser L."/>
            <person name="Kyrpides N."/>
            <person name="Kim E."/>
            <person name="Taghavi S."/>
            <person name="Vangronsveld D."/>
            <person name="van der Lelie D."/>
            <person name="Richardson P."/>
        </authorList>
    </citation>
    <scope>NUCLEOTIDE SEQUENCE [LARGE SCALE GENOMIC DNA]</scope>
    <source>
        <strain>W619</strain>
    </source>
</reference>
<evidence type="ECO:0000255" key="1">
    <source>
        <dbReference type="HAMAP-Rule" id="MF_01217"/>
    </source>
</evidence>
<evidence type="ECO:0000255" key="2">
    <source>
        <dbReference type="PROSITE-ProRule" id="PRU00258"/>
    </source>
</evidence>
<name>ACP_PSEPW</name>
<dbReference type="EMBL" id="CP000949">
    <property type="protein sequence ID" value="ACA72031.1"/>
    <property type="molecule type" value="Genomic_DNA"/>
</dbReference>
<dbReference type="SMR" id="B1J4Z1"/>
<dbReference type="STRING" id="390235.PputW619_1526"/>
<dbReference type="KEGG" id="ppw:PputW619_1526"/>
<dbReference type="eggNOG" id="COG0236">
    <property type="taxonomic scope" value="Bacteria"/>
</dbReference>
<dbReference type="HOGENOM" id="CLU_108696_5_1_6"/>
<dbReference type="OrthoDB" id="9804551at2"/>
<dbReference type="UniPathway" id="UPA00094"/>
<dbReference type="GO" id="GO:0005829">
    <property type="term" value="C:cytosol"/>
    <property type="evidence" value="ECO:0007669"/>
    <property type="project" value="TreeGrafter"/>
</dbReference>
<dbReference type="GO" id="GO:0016020">
    <property type="term" value="C:membrane"/>
    <property type="evidence" value="ECO:0007669"/>
    <property type="project" value="GOC"/>
</dbReference>
<dbReference type="GO" id="GO:0000035">
    <property type="term" value="F:acyl binding"/>
    <property type="evidence" value="ECO:0007669"/>
    <property type="project" value="TreeGrafter"/>
</dbReference>
<dbReference type="GO" id="GO:0000036">
    <property type="term" value="F:acyl carrier activity"/>
    <property type="evidence" value="ECO:0007669"/>
    <property type="project" value="UniProtKB-UniRule"/>
</dbReference>
<dbReference type="GO" id="GO:0009245">
    <property type="term" value="P:lipid A biosynthetic process"/>
    <property type="evidence" value="ECO:0007669"/>
    <property type="project" value="TreeGrafter"/>
</dbReference>
<dbReference type="FunFam" id="1.10.1200.10:FF:000001">
    <property type="entry name" value="Acyl carrier protein"/>
    <property type="match status" value="1"/>
</dbReference>
<dbReference type="Gene3D" id="1.10.1200.10">
    <property type="entry name" value="ACP-like"/>
    <property type="match status" value="1"/>
</dbReference>
<dbReference type="HAMAP" id="MF_01217">
    <property type="entry name" value="Acyl_carrier"/>
    <property type="match status" value="1"/>
</dbReference>
<dbReference type="InterPro" id="IPR003231">
    <property type="entry name" value="ACP"/>
</dbReference>
<dbReference type="InterPro" id="IPR036736">
    <property type="entry name" value="ACP-like_sf"/>
</dbReference>
<dbReference type="InterPro" id="IPR009081">
    <property type="entry name" value="PP-bd_ACP"/>
</dbReference>
<dbReference type="InterPro" id="IPR006162">
    <property type="entry name" value="Ppantetheine_attach_site"/>
</dbReference>
<dbReference type="NCBIfam" id="TIGR00517">
    <property type="entry name" value="acyl_carrier"/>
    <property type="match status" value="1"/>
</dbReference>
<dbReference type="NCBIfam" id="NF002148">
    <property type="entry name" value="PRK00982.1-2"/>
    <property type="match status" value="1"/>
</dbReference>
<dbReference type="NCBIfam" id="NF002149">
    <property type="entry name" value="PRK00982.1-3"/>
    <property type="match status" value="1"/>
</dbReference>
<dbReference type="NCBIfam" id="NF002150">
    <property type="entry name" value="PRK00982.1-4"/>
    <property type="match status" value="1"/>
</dbReference>
<dbReference type="NCBIfam" id="NF002151">
    <property type="entry name" value="PRK00982.1-5"/>
    <property type="match status" value="1"/>
</dbReference>
<dbReference type="PANTHER" id="PTHR20863">
    <property type="entry name" value="ACYL CARRIER PROTEIN"/>
    <property type="match status" value="1"/>
</dbReference>
<dbReference type="PANTHER" id="PTHR20863:SF76">
    <property type="entry name" value="CARRIER DOMAIN-CONTAINING PROTEIN"/>
    <property type="match status" value="1"/>
</dbReference>
<dbReference type="Pfam" id="PF00550">
    <property type="entry name" value="PP-binding"/>
    <property type="match status" value="1"/>
</dbReference>
<dbReference type="SUPFAM" id="SSF47336">
    <property type="entry name" value="ACP-like"/>
    <property type="match status" value="1"/>
</dbReference>
<dbReference type="PROSITE" id="PS50075">
    <property type="entry name" value="CARRIER"/>
    <property type="match status" value="1"/>
</dbReference>
<dbReference type="PROSITE" id="PS00012">
    <property type="entry name" value="PHOSPHOPANTETHEINE"/>
    <property type="match status" value="1"/>
</dbReference>
<proteinExistence type="inferred from homology"/>
<feature type="chain" id="PRO_1000139055" description="Acyl carrier protein">
    <location>
        <begin position="1"/>
        <end position="78"/>
    </location>
</feature>
<feature type="domain" description="Carrier" evidence="2">
    <location>
        <begin position="2"/>
        <end position="77"/>
    </location>
</feature>
<feature type="modified residue" description="O-(pantetheine 4'-phosphoryl)serine" evidence="2">
    <location>
        <position position="37"/>
    </location>
</feature>
<sequence>MSTIEERVKKIVAEQLGVKEDEVTNEKSFVDDLGADSLDTVELVMALEEEFETEIPDEEAEKITTVQAAIDYVNSHQG</sequence>
<protein>
    <recommendedName>
        <fullName evidence="1">Acyl carrier protein</fullName>
        <shortName evidence="1">ACP</shortName>
    </recommendedName>
</protein>
<organism>
    <name type="scientific">Pseudomonas putida (strain W619)</name>
    <dbReference type="NCBI Taxonomy" id="390235"/>
    <lineage>
        <taxon>Bacteria</taxon>
        <taxon>Pseudomonadati</taxon>
        <taxon>Pseudomonadota</taxon>
        <taxon>Gammaproteobacteria</taxon>
        <taxon>Pseudomonadales</taxon>
        <taxon>Pseudomonadaceae</taxon>
        <taxon>Pseudomonas</taxon>
    </lineage>
</organism>
<gene>
    <name evidence="1" type="primary">acpP</name>
    <name type="ordered locus">PputW619_1526</name>
</gene>
<keyword id="KW-0963">Cytoplasm</keyword>
<keyword id="KW-0275">Fatty acid biosynthesis</keyword>
<keyword id="KW-0276">Fatty acid metabolism</keyword>
<keyword id="KW-0444">Lipid biosynthesis</keyword>
<keyword id="KW-0443">Lipid metabolism</keyword>
<keyword id="KW-0596">Phosphopantetheine</keyword>
<keyword id="KW-0597">Phosphoprotein</keyword>